<proteinExistence type="inferred from homology"/>
<keyword id="KW-0342">GTP-binding</keyword>
<keyword id="KW-0378">Hydrolase</keyword>
<keyword id="KW-0547">Nucleotide-binding</keyword>
<organism>
    <name type="scientific">Saccharolobus islandicus (strain M.16.4 / Kamchatka #3)</name>
    <name type="common">Sulfolobus islandicus</name>
    <dbReference type="NCBI Taxonomy" id="426118"/>
    <lineage>
        <taxon>Archaea</taxon>
        <taxon>Thermoproteota</taxon>
        <taxon>Thermoprotei</taxon>
        <taxon>Sulfolobales</taxon>
        <taxon>Sulfolobaceae</taxon>
        <taxon>Saccharolobus</taxon>
    </lineage>
</organism>
<comment type="function">
    <text evidence="1">Catalyzes the formation of 2-amino-5-formylamino-6-ribofuranosylamino-4(3H)-pyrimidinone ribonucleotide monophosphate and inorganic phosphate from GTP. Also has an independent pyrophosphate phosphohydrolase activity.</text>
</comment>
<comment type="catalytic activity">
    <reaction evidence="1">
        <text>GTP + 3 H2O = 2-amino-5-formylamino-6-(5-phospho-D-ribosylamino)pyrimidin-4(3H)-one + 2 phosphate + 2 H(+)</text>
        <dbReference type="Rhea" id="RHEA:22468"/>
        <dbReference type="ChEBI" id="CHEBI:15377"/>
        <dbReference type="ChEBI" id="CHEBI:15378"/>
        <dbReference type="ChEBI" id="CHEBI:37565"/>
        <dbReference type="ChEBI" id="CHEBI:43474"/>
        <dbReference type="ChEBI" id="CHEBI:57258"/>
        <dbReference type="EC" id="3.5.4.29"/>
    </reaction>
</comment>
<comment type="similarity">
    <text evidence="1">Belongs to the archaeal-type GTP cyclohydrolase family.</text>
</comment>
<dbReference type="EC" id="3.5.4.29" evidence="1"/>
<dbReference type="EMBL" id="CP001402">
    <property type="protein sequence ID" value="ACR42355.1"/>
    <property type="molecule type" value="Genomic_DNA"/>
</dbReference>
<dbReference type="RefSeq" id="WP_012711684.1">
    <property type="nucleotide sequence ID" value="NC_012726.1"/>
</dbReference>
<dbReference type="SMR" id="C4KIE1"/>
<dbReference type="KEGG" id="sid:M164_1751"/>
<dbReference type="HOGENOM" id="CLU_080076_0_0_2"/>
<dbReference type="Proteomes" id="UP000001479">
    <property type="component" value="Chromosome"/>
</dbReference>
<dbReference type="GO" id="GO:0005525">
    <property type="term" value="F:GTP binding"/>
    <property type="evidence" value="ECO:0007669"/>
    <property type="project" value="UniProtKB-KW"/>
</dbReference>
<dbReference type="GO" id="GO:0043740">
    <property type="term" value="F:GTP cyclohydrolase IIa activity"/>
    <property type="evidence" value="ECO:0007669"/>
    <property type="project" value="UniProtKB-EC"/>
</dbReference>
<dbReference type="GO" id="GO:0009058">
    <property type="term" value="P:biosynthetic process"/>
    <property type="evidence" value="ECO:0007669"/>
    <property type="project" value="InterPro"/>
</dbReference>
<dbReference type="Gene3D" id="3.30.70.270">
    <property type="match status" value="1"/>
</dbReference>
<dbReference type="Gene3D" id="3.30.70.1230">
    <property type="entry name" value="Nucleotide cyclase"/>
    <property type="match status" value="1"/>
</dbReference>
<dbReference type="HAMAP" id="MF_00608">
    <property type="entry name" value="GTP_cyclohydro_3"/>
    <property type="match status" value="1"/>
</dbReference>
<dbReference type="InterPro" id="IPR007839">
    <property type="entry name" value="GTP_CycHdrlase_3"/>
</dbReference>
<dbReference type="InterPro" id="IPR029787">
    <property type="entry name" value="Nucleotide_cyclase"/>
</dbReference>
<dbReference type="InterPro" id="IPR043128">
    <property type="entry name" value="Rev_trsase/Diguanyl_cyclase"/>
</dbReference>
<dbReference type="PANTHER" id="PTHR42202">
    <property type="entry name" value="GTP CYCLOHYDROLASE III"/>
    <property type="match status" value="1"/>
</dbReference>
<dbReference type="PANTHER" id="PTHR42202:SF1">
    <property type="entry name" value="GTP CYCLOHYDROLASE III"/>
    <property type="match status" value="1"/>
</dbReference>
<dbReference type="Pfam" id="PF05165">
    <property type="entry name" value="GCH_III"/>
    <property type="match status" value="1"/>
</dbReference>
<dbReference type="PIRSF" id="PIRSF009265">
    <property type="entry name" value="GTP_cyclohydro_3"/>
    <property type="match status" value="1"/>
</dbReference>
<sequence length="230" mass="26768">MKVLAIKLVDYREWTERLGYDREWLIQKIQNKFMMKIHEIASQYSTFPLQLRFDNFLMIVDGITNTQLIYMINDMQENLPVGIKTCLGYGKTPLEAQWNASVCLNNKEDKFKEYVDEKIAALHFDINFNTEALKYTSVYDSFLEITNIYVDLSRFLYKIGGILQYLGGDNYLGFVSTNSVNKVIEKFSDDNKIKVGIGIGQNARTAIKLATTSLEKIRNNREKTWHIEEE</sequence>
<evidence type="ECO:0000255" key="1">
    <source>
        <dbReference type="HAMAP-Rule" id="MF_00608"/>
    </source>
</evidence>
<accession>C4KIE1</accession>
<reference key="1">
    <citation type="journal article" date="2009" name="Proc. Natl. Acad. Sci. U.S.A.">
        <title>Biogeography of the Sulfolobus islandicus pan-genome.</title>
        <authorList>
            <person name="Reno M.L."/>
            <person name="Held N.L."/>
            <person name="Fields C.J."/>
            <person name="Burke P.V."/>
            <person name="Whitaker R.J."/>
        </authorList>
    </citation>
    <scope>NUCLEOTIDE SEQUENCE [LARGE SCALE GENOMIC DNA]</scope>
    <source>
        <strain>M.16.4 / Kamchatka #3</strain>
    </source>
</reference>
<protein>
    <recommendedName>
        <fullName evidence="1">GTP cyclohydrolase III</fullName>
        <ecNumber evidence="1">3.5.4.29</ecNumber>
    </recommendedName>
</protein>
<feature type="chain" id="PRO_1000212260" description="GTP cyclohydrolase III">
    <location>
        <begin position="1"/>
        <end position="230"/>
    </location>
</feature>
<name>GCH3_SACI6</name>
<gene>
    <name evidence="1" type="primary">gch3</name>
    <name type="ordered locus">M164_1751</name>
</gene>